<name>ZCD_CROSA</name>
<evidence type="ECO:0000250" key="1"/>
<evidence type="ECO:0000269" key="2">
    <source>
    </source>
</evidence>
<evidence type="ECO:0000305" key="3"/>
<keyword id="KW-0957">Chromoplast</keyword>
<keyword id="KW-0223">Dioxygenase</keyword>
<keyword id="KW-0408">Iron</keyword>
<keyword id="KW-0479">Metal-binding</keyword>
<keyword id="KW-0560">Oxidoreductase</keyword>
<keyword id="KW-0934">Plastid</keyword>
<keyword id="KW-0346">Stress response</keyword>
<keyword id="KW-0809">Transit peptide</keyword>
<organism>
    <name type="scientific">Crocus sativus</name>
    <name type="common">Saffron</name>
    <dbReference type="NCBI Taxonomy" id="82528"/>
    <lineage>
        <taxon>Eukaryota</taxon>
        <taxon>Viridiplantae</taxon>
        <taxon>Streptophyta</taxon>
        <taxon>Embryophyta</taxon>
        <taxon>Tracheophyta</taxon>
        <taxon>Spermatophyta</taxon>
        <taxon>Magnoliopsida</taxon>
        <taxon>Liliopsida</taxon>
        <taxon>Asparagales</taxon>
        <taxon>Iridaceae</taxon>
        <taxon>Crocoideae</taxon>
        <taxon>Croceae</taxon>
        <taxon>Crocus</taxon>
    </lineage>
</organism>
<reference key="1">
    <citation type="journal article" date="2003" name="Plant Cell">
        <title>Oxidative remodeling of chromoplast carotenoids: identification of the carotenoid dioxygenase CsCCD and CsZCD genes involved in Crocus secondary metabolite biogenesis.</title>
        <authorList>
            <person name="Bouvier F."/>
            <person name="Suire C."/>
            <person name="Mutterer J."/>
            <person name="Camara B."/>
        </authorList>
    </citation>
    <scope>NUCLEOTIDE SEQUENCE [MRNA]</scope>
    <scope>FUNCTION</scope>
    <scope>CATALYTIC ACTIVITY</scope>
    <scope>INDUCTION</scope>
    <scope>TISSUE SPECIFICITY</scope>
    <scope>SUBCELLULAR LOCATION</scope>
    <source>
        <tissue>Style</tissue>
    </source>
</reference>
<dbReference type="EC" id="1.13.11.84" evidence="2"/>
<dbReference type="EMBL" id="AJ489276">
    <property type="protein sequence ID" value="CAD33262.1"/>
    <property type="molecule type" value="Genomic_DNA"/>
</dbReference>
<dbReference type="SMR" id="Q84K96"/>
<dbReference type="BioCyc" id="MetaCyc:MONOMER-12426"/>
<dbReference type="BRENDA" id="1.13.11.84">
    <property type="organism ID" value="7275"/>
</dbReference>
<dbReference type="GO" id="GO:0009570">
    <property type="term" value="C:chloroplast stroma"/>
    <property type="evidence" value="ECO:0007669"/>
    <property type="project" value="TreeGrafter"/>
</dbReference>
<dbReference type="GO" id="GO:0009509">
    <property type="term" value="C:chromoplast"/>
    <property type="evidence" value="ECO:0007669"/>
    <property type="project" value="UniProtKB-SubCell"/>
</dbReference>
<dbReference type="GO" id="GO:0010436">
    <property type="term" value="F:carotenoid dioxygenase activity"/>
    <property type="evidence" value="ECO:0007669"/>
    <property type="project" value="TreeGrafter"/>
</dbReference>
<dbReference type="GO" id="GO:0046872">
    <property type="term" value="F:metal ion binding"/>
    <property type="evidence" value="ECO:0007669"/>
    <property type="project" value="UniProtKB-KW"/>
</dbReference>
<dbReference type="GO" id="GO:0016121">
    <property type="term" value="P:carotene catabolic process"/>
    <property type="evidence" value="ECO:0007669"/>
    <property type="project" value="TreeGrafter"/>
</dbReference>
<dbReference type="InterPro" id="IPR004294">
    <property type="entry name" value="Carotenoid_Oase"/>
</dbReference>
<dbReference type="PANTHER" id="PTHR10543">
    <property type="entry name" value="BETA-CAROTENE DIOXYGENASE"/>
    <property type="match status" value="1"/>
</dbReference>
<dbReference type="PANTHER" id="PTHR10543:SF46">
    <property type="entry name" value="CAROTENOID CLEAVAGE DIOXYGENASE 4, CHLOROPLASTIC-RELATED"/>
    <property type="match status" value="1"/>
</dbReference>
<dbReference type="Pfam" id="PF03055">
    <property type="entry name" value="RPE65"/>
    <property type="match status" value="1"/>
</dbReference>
<accession>Q84K96</accession>
<protein>
    <recommendedName>
        <fullName>Zeaxanthin 7,8(7',8')-cleavage dioxygenase, chromoplastic</fullName>
        <ecNumber evidence="2">1.13.11.84</ecNumber>
    </recommendedName>
    <alternativeName>
        <fullName>CsZCD</fullName>
    </alternativeName>
    <alternativeName>
        <fullName>Zeaxanthin 7,8-dioxygenase</fullName>
    </alternativeName>
</protein>
<sequence length="369" mass="40750">MQVDPTKGIGLANTSLQFSNGRLHALCEYDLPYVVRLSPEDGDISTVGRIENNVSTKSTTAHPKTDPVTGETFSFSYGPIQPYVTYSRYDCDGKKSGPDVPIFSFKEPSFVHDFAITEHYAVFPDIQIVMKPAEIVRGRRMIGPDLEKVPRLGLLPRYATSDSEMRWFDVPGFNMVHVVNAWEEEGGEVVVIVAPNVSPIENAIDRFDLLHVSVEMARIELKSGSVSRTLLSAENLDFGVIHRGYSGRKSRYAYLGVGDPMPKIRGVVKVDFELAGRGECVVARREFGVGCFGGEPFFVPASSKKSGGEEDDGYVVSYLHDEGKGESSFVVMDARSPELEILAEVVLPRRVPYGFHGLFVTEAELLSQQ</sequence>
<comment type="function">
    <text evidence="2">Cleaves zeaxanthin symmetrically at the 7-8 and 7'-8' double bonds to produce crocetin dialdehyde and hydroxy-beta-cyclocitral, two water-soluble precursors sequestred in vacuoles and involved in the synthesis of saffron pigment and aroma.</text>
</comment>
<comment type="catalytic activity">
    <reaction evidence="2">
        <text>all-trans-zeaxanthin + 2 O2 = crocetin dialdehyde + 2 3beta-hydroxy-beta-cyclocitral</text>
        <dbReference type="Rhea" id="RHEA:26397"/>
        <dbReference type="ChEBI" id="CHEBI:15379"/>
        <dbReference type="ChEBI" id="CHEBI:27547"/>
        <dbReference type="ChEBI" id="CHEBI:53166"/>
        <dbReference type="ChEBI" id="CHEBI:53167"/>
        <dbReference type="EC" id="1.13.11.84"/>
    </reaction>
</comment>
<comment type="cofactor">
    <cofactor evidence="1">
        <name>Fe(2+)</name>
        <dbReference type="ChEBI" id="CHEBI:29033"/>
    </cofactor>
    <text evidence="1">Binds 1 Fe(2+) ion per subunit.</text>
</comment>
<comment type="subcellular location">
    <subcellularLocation>
        <location evidence="2">Plastid</location>
        <location evidence="2">Chromoplast</location>
    </subcellularLocation>
</comment>
<comment type="tissue specificity">
    <text evidence="2">In the style branches.</text>
</comment>
<comment type="induction">
    <text evidence="2">By dehydration.</text>
</comment>
<comment type="similarity">
    <text evidence="3">Belongs to the carotenoid oxygenase family.</text>
</comment>
<gene>
    <name type="primary">ZCD</name>
</gene>
<feature type="transit peptide" description="Chromoplast">
    <location>
        <begin position="1"/>
        <end status="unknown"/>
    </location>
</feature>
<feature type="chain" id="PRO_0000282608" description="Zeaxanthin 7,8(7',8')-cleavage dioxygenase, chromoplastic">
    <location>
        <begin status="unknown"/>
        <end position="369"/>
    </location>
</feature>
<feature type="binding site" evidence="1">
    <location>
        <position position="62"/>
    </location>
    <ligand>
        <name>Fe cation</name>
        <dbReference type="ChEBI" id="CHEBI:24875"/>
        <note>catalytic</note>
    </ligand>
</feature>
<feature type="binding site" evidence="1">
    <location>
        <position position="112"/>
    </location>
    <ligand>
        <name>Fe cation</name>
        <dbReference type="ChEBI" id="CHEBI:24875"/>
        <note>catalytic</note>
    </ligand>
</feature>
<feature type="binding site" evidence="1">
    <location>
        <position position="177"/>
    </location>
    <ligand>
        <name>Fe cation</name>
        <dbReference type="ChEBI" id="CHEBI:24875"/>
        <note>catalytic</note>
    </ligand>
</feature>
<feature type="binding site" evidence="1">
    <location>
        <position position="356"/>
    </location>
    <ligand>
        <name>Fe cation</name>
        <dbReference type="ChEBI" id="CHEBI:24875"/>
        <note>catalytic</note>
    </ligand>
</feature>
<proteinExistence type="evidence at protein level"/>